<dbReference type="EC" id="3.4.23.36" evidence="1"/>
<dbReference type="EMBL" id="CP001087">
    <property type="protein sequence ID" value="ACN15584.1"/>
    <property type="molecule type" value="Genomic_DNA"/>
</dbReference>
<dbReference type="RefSeq" id="WP_015904349.1">
    <property type="nucleotide sequence ID" value="NC_012108.1"/>
</dbReference>
<dbReference type="SMR" id="C0QGT5"/>
<dbReference type="STRING" id="177437.HRM2_24900"/>
<dbReference type="KEGG" id="dat:HRM2_24900"/>
<dbReference type="eggNOG" id="COG0597">
    <property type="taxonomic scope" value="Bacteria"/>
</dbReference>
<dbReference type="HOGENOM" id="CLU_083252_3_0_7"/>
<dbReference type="OrthoDB" id="9810259at2"/>
<dbReference type="UniPathway" id="UPA00665"/>
<dbReference type="Proteomes" id="UP000000442">
    <property type="component" value="Chromosome"/>
</dbReference>
<dbReference type="GO" id="GO:0005886">
    <property type="term" value="C:plasma membrane"/>
    <property type="evidence" value="ECO:0007669"/>
    <property type="project" value="UniProtKB-SubCell"/>
</dbReference>
<dbReference type="GO" id="GO:0004190">
    <property type="term" value="F:aspartic-type endopeptidase activity"/>
    <property type="evidence" value="ECO:0007669"/>
    <property type="project" value="UniProtKB-UniRule"/>
</dbReference>
<dbReference type="GO" id="GO:0006508">
    <property type="term" value="P:proteolysis"/>
    <property type="evidence" value="ECO:0007669"/>
    <property type="project" value="UniProtKB-KW"/>
</dbReference>
<dbReference type="HAMAP" id="MF_00161">
    <property type="entry name" value="LspA"/>
    <property type="match status" value="1"/>
</dbReference>
<dbReference type="InterPro" id="IPR001872">
    <property type="entry name" value="Peptidase_A8"/>
</dbReference>
<dbReference type="NCBIfam" id="TIGR00077">
    <property type="entry name" value="lspA"/>
    <property type="match status" value="1"/>
</dbReference>
<dbReference type="PANTHER" id="PTHR33695">
    <property type="entry name" value="LIPOPROTEIN SIGNAL PEPTIDASE"/>
    <property type="match status" value="1"/>
</dbReference>
<dbReference type="PANTHER" id="PTHR33695:SF1">
    <property type="entry name" value="LIPOPROTEIN SIGNAL PEPTIDASE"/>
    <property type="match status" value="1"/>
</dbReference>
<dbReference type="Pfam" id="PF01252">
    <property type="entry name" value="Peptidase_A8"/>
    <property type="match status" value="1"/>
</dbReference>
<dbReference type="PRINTS" id="PR00781">
    <property type="entry name" value="LIPOSIGPTASE"/>
</dbReference>
<dbReference type="PROSITE" id="PS00855">
    <property type="entry name" value="SPASE_II"/>
    <property type="match status" value="1"/>
</dbReference>
<accession>C0QGT5</accession>
<evidence type="ECO:0000255" key="1">
    <source>
        <dbReference type="HAMAP-Rule" id="MF_00161"/>
    </source>
</evidence>
<organism>
    <name type="scientific">Desulforapulum autotrophicum (strain ATCC 43914 / DSM 3382 / VKM B-1955 / HRM2)</name>
    <name type="common">Desulfobacterium autotrophicum</name>
    <dbReference type="NCBI Taxonomy" id="177437"/>
    <lineage>
        <taxon>Bacteria</taxon>
        <taxon>Pseudomonadati</taxon>
        <taxon>Thermodesulfobacteriota</taxon>
        <taxon>Desulfobacteria</taxon>
        <taxon>Desulfobacterales</taxon>
        <taxon>Desulfobacteraceae</taxon>
        <taxon>Desulforapulum</taxon>
    </lineage>
</organism>
<feature type="chain" id="PRO_1000203592" description="Lipoprotein signal peptidase">
    <location>
        <begin position="1"/>
        <end position="162"/>
    </location>
</feature>
<feature type="transmembrane region" description="Helical" evidence="1">
    <location>
        <begin position="9"/>
        <end position="29"/>
    </location>
</feature>
<feature type="transmembrane region" description="Helical" evidence="1">
    <location>
        <begin position="39"/>
        <end position="59"/>
    </location>
</feature>
<feature type="transmembrane region" description="Helical" evidence="1">
    <location>
        <begin position="66"/>
        <end position="86"/>
    </location>
</feature>
<feature type="transmembrane region" description="Helical" evidence="1">
    <location>
        <begin position="95"/>
        <end position="115"/>
    </location>
</feature>
<feature type="transmembrane region" description="Helical" evidence="1">
    <location>
        <begin position="136"/>
        <end position="156"/>
    </location>
</feature>
<feature type="active site" evidence="1">
    <location>
        <position position="122"/>
    </location>
</feature>
<feature type="active site" evidence="1">
    <location>
        <position position="140"/>
    </location>
</feature>
<gene>
    <name evidence="1" type="primary">lspA</name>
    <name type="ordered locus">HRM2_24900</name>
</gene>
<reference key="1">
    <citation type="journal article" date="2009" name="Environ. Microbiol.">
        <title>Genome sequence of Desulfobacterium autotrophicum HRM2, a marine sulfate reducer oxidizing organic carbon completely to carbon dioxide.</title>
        <authorList>
            <person name="Strittmatter A.W."/>
            <person name="Liesegang H."/>
            <person name="Rabus R."/>
            <person name="Decker I."/>
            <person name="Amann J."/>
            <person name="Andres S."/>
            <person name="Henne A."/>
            <person name="Fricke W.F."/>
            <person name="Martinez-Arias R."/>
            <person name="Bartels D."/>
            <person name="Goesmann A."/>
            <person name="Krause L."/>
            <person name="Puehler A."/>
            <person name="Klenk H.P."/>
            <person name="Richter M."/>
            <person name="Schuler M."/>
            <person name="Gloeckner F.O."/>
            <person name="Meyerdierks A."/>
            <person name="Gottschalk G."/>
            <person name="Amann R."/>
        </authorList>
    </citation>
    <scope>NUCLEOTIDE SEQUENCE [LARGE SCALE GENOMIC DNA]</scope>
    <source>
        <strain>ATCC 43914 / DSM 3382 / VKM B-1955 / HRM2</strain>
    </source>
</reference>
<name>LSPA_DESAH</name>
<sequence>MNTRALVRLCLVSTIIIALDQATKALVATTLVLHESIPVIHGFFNLTHIMNPGGAFGLFAGHSPEVRKFFFLFVSSLVALMILWLYQRTAQTHRVLSFGLAAIFAGAVGNLIDRFRFGMVVDFLDFYLGAYHWPAFNVADSAITIGMVVFVYHVIFNKVPDL</sequence>
<proteinExistence type="inferred from homology"/>
<protein>
    <recommendedName>
        <fullName evidence="1">Lipoprotein signal peptidase</fullName>
        <ecNumber evidence="1">3.4.23.36</ecNumber>
    </recommendedName>
    <alternativeName>
        <fullName evidence="1">Prolipoprotein signal peptidase</fullName>
    </alternativeName>
    <alternativeName>
        <fullName evidence="1">Signal peptidase II</fullName>
        <shortName evidence="1">SPase II</shortName>
    </alternativeName>
</protein>
<keyword id="KW-0064">Aspartyl protease</keyword>
<keyword id="KW-0997">Cell inner membrane</keyword>
<keyword id="KW-1003">Cell membrane</keyword>
<keyword id="KW-0378">Hydrolase</keyword>
<keyword id="KW-0472">Membrane</keyword>
<keyword id="KW-0645">Protease</keyword>
<keyword id="KW-1185">Reference proteome</keyword>
<keyword id="KW-0812">Transmembrane</keyword>
<keyword id="KW-1133">Transmembrane helix</keyword>
<comment type="function">
    <text evidence="1">This protein specifically catalyzes the removal of signal peptides from prolipoproteins.</text>
</comment>
<comment type="catalytic activity">
    <reaction evidence="1">
        <text>Release of signal peptides from bacterial membrane prolipoproteins. Hydrolyzes -Xaa-Yaa-Zaa-|-(S,diacylglyceryl)Cys-, in which Xaa is hydrophobic (preferably Leu), and Yaa (Ala or Ser) and Zaa (Gly or Ala) have small, neutral side chains.</text>
        <dbReference type="EC" id="3.4.23.36"/>
    </reaction>
</comment>
<comment type="pathway">
    <text evidence="1">Protein modification; lipoprotein biosynthesis (signal peptide cleavage).</text>
</comment>
<comment type="subcellular location">
    <subcellularLocation>
        <location evidence="1">Cell inner membrane</location>
        <topology evidence="1">Multi-pass membrane protein</topology>
    </subcellularLocation>
</comment>
<comment type="similarity">
    <text evidence="1">Belongs to the peptidase A8 family.</text>
</comment>